<feature type="chain" id="PRO_0000460032" description="Spindle pole body protein CSA6">
    <location>
        <begin position="1"/>
        <end position="533"/>
    </location>
</feature>
<feature type="region of interest" description="Disordered" evidence="3">
    <location>
        <begin position="1"/>
        <end position="32"/>
    </location>
</feature>
<feature type="region of interest" description="Disordered" evidence="3">
    <location>
        <begin position="53"/>
        <end position="130"/>
    </location>
</feature>
<feature type="region of interest" description="Disordered" evidence="3">
    <location>
        <begin position="309"/>
        <end position="329"/>
    </location>
</feature>
<feature type="region of interest" description="Disordered" evidence="3">
    <location>
        <begin position="349"/>
        <end position="453"/>
    </location>
</feature>
<feature type="coiled-coil region" evidence="2">
    <location>
        <begin position="136"/>
        <end position="236"/>
    </location>
</feature>
<feature type="compositionally biased region" description="Basic and acidic residues" evidence="3">
    <location>
        <begin position="18"/>
        <end position="30"/>
    </location>
</feature>
<feature type="compositionally biased region" description="Basic and acidic residues" evidence="3">
    <location>
        <begin position="53"/>
        <end position="68"/>
    </location>
</feature>
<feature type="compositionally biased region" description="Low complexity" evidence="3">
    <location>
        <begin position="83"/>
        <end position="94"/>
    </location>
</feature>
<feature type="compositionally biased region" description="Polar residues" evidence="3">
    <location>
        <begin position="103"/>
        <end position="121"/>
    </location>
</feature>
<feature type="compositionally biased region" description="Basic and acidic residues" evidence="3">
    <location>
        <begin position="309"/>
        <end position="318"/>
    </location>
</feature>
<feature type="compositionally biased region" description="Polar residues" evidence="3">
    <location>
        <begin position="349"/>
        <end position="392"/>
    </location>
</feature>
<feature type="compositionally biased region" description="Polar residues" evidence="3">
    <location>
        <begin position="405"/>
        <end position="421"/>
    </location>
</feature>
<feature type="compositionally biased region" description="Basic and acidic residues" evidence="3">
    <location>
        <begin position="432"/>
        <end position="445"/>
    </location>
</feature>
<organism evidence="9">
    <name type="scientific">Candida dubliniensis (strain CD36 / ATCC MYA-646 / CBS 7987 / NCPF 3949 / NRRL Y-17841)</name>
    <name type="common">Yeast</name>
    <dbReference type="NCBI Taxonomy" id="573826"/>
    <lineage>
        <taxon>Eukaryota</taxon>
        <taxon>Fungi</taxon>
        <taxon>Dikarya</taxon>
        <taxon>Ascomycota</taxon>
        <taxon>Saccharomycotina</taxon>
        <taxon>Pichiomycetes</taxon>
        <taxon>Debaryomycetaceae</taxon>
        <taxon>Candida/Lodderomyces clade</taxon>
        <taxon>Candida</taxon>
    </lineage>
</organism>
<proteinExistence type="inferred from homology"/>
<reference evidence="9" key="1">
    <citation type="journal article" date="2009" name="Genome Res.">
        <title>Comparative genomics of the fungal pathogens Candida dubliniensis and Candida albicans.</title>
        <authorList>
            <person name="Jackson A.P."/>
            <person name="Gamble J.A."/>
            <person name="Yeomans T."/>
            <person name="Moran G.P."/>
            <person name="Saunders D."/>
            <person name="Harris D."/>
            <person name="Aslett M."/>
            <person name="Barrell J.F."/>
            <person name="Butler G."/>
            <person name="Citiulo F."/>
            <person name="Coleman D.C."/>
            <person name="de Groot P.W.J."/>
            <person name="Goodwin T.J."/>
            <person name="Quail M.A."/>
            <person name="McQuillan J."/>
            <person name="Munro C.A."/>
            <person name="Pain A."/>
            <person name="Poulter R.T."/>
            <person name="Rajandream M.A."/>
            <person name="Renauld H."/>
            <person name="Spiering M.J."/>
            <person name="Tivey A."/>
            <person name="Gow N.A.R."/>
            <person name="Barrell B."/>
            <person name="Sullivan D.J."/>
            <person name="Berriman M."/>
        </authorList>
    </citation>
    <scope>NUCLEOTIDE SEQUENCE [LARGE SCALE GENOMIC DNA]</scope>
    <source>
        <strain evidence="9">CD36 / ATCC MYA-646 / CBS 7987 / NCPF 3949 / NRRL Y-17841</strain>
    </source>
</reference>
<reference evidence="6" key="2">
    <citation type="journal article" date="2022" name="Nat. Commun.">
        <title>A phylogenetically-restricted essential cell cycle progression factor in the human pathogen Candida albicans.</title>
        <authorList>
            <person name="Jaitly P."/>
            <person name="Legrand M."/>
            <person name="Das A."/>
            <person name="Patel T."/>
            <person name="Chauvel M."/>
            <person name="Maufrais C."/>
            <person name="d'Enfert C."/>
            <person name="Sanyal K."/>
        </authorList>
    </citation>
    <scope>FUNCTION</scope>
    <scope>SUBCELLULAR LOCATION</scope>
</reference>
<gene>
    <name evidence="5" type="primary">CSA6</name>
    <name evidence="8" type="ordered locus">Cd36_16290</name>
</gene>
<comment type="function">
    <text evidence="1 4">Plays a role in mitotic spindle pole body organization, possibly at the point of spindle pole body separation (PubMed:35869076). Required for mitotic exit (By similarity).</text>
</comment>
<comment type="subcellular location">
    <subcellularLocation>
        <location evidence="7">Cytoplasm</location>
        <location evidence="7">Cytoskeleton</location>
        <location evidence="7">Microtubule organizing center</location>
        <location evidence="7">Spindle pole body</location>
    </subcellularLocation>
</comment>
<accession>B9WAI9</accession>
<keyword id="KW-0175">Coiled coil</keyword>
<keyword id="KW-0963">Cytoplasm</keyword>
<keyword id="KW-0206">Cytoskeleton</keyword>
<name>CSA6_CANDC</name>
<evidence type="ECO:0000250" key="1">
    <source>
        <dbReference type="UniProtKB" id="A0A1D8PGB8"/>
    </source>
</evidence>
<evidence type="ECO:0000255" key="2"/>
<evidence type="ECO:0000256" key="3">
    <source>
        <dbReference type="SAM" id="MobiDB-lite"/>
    </source>
</evidence>
<evidence type="ECO:0000269" key="4">
    <source>
    </source>
</evidence>
<evidence type="ECO:0000303" key="5">
    <source>
    </source>
</evidence>
<evidence type="ECO:0000305" key="6"/>
<evidence type="ECO:0000305" key="7">
    <source>
    </source>
</evidence>
<evidence type="ECO:0000312" key="8">
    <source>
        <dbReference type="CGD" id="CAL0000161744"/>
    </source>
</evidence>
<evidence type="ECO:0000312" key="9">
    <source>
        <dbReference type="Proteomes" id="UP000002605"/>
    </source>
</evidence>
<protein>
    <recommendedName>
        <fullName evidence="6">Spindle pole body protein CSA6</fullName>
    </recommendedName>
    <alternativeName>
        <fullName evidence="5">Chromosomal stability protein 6</fullName>
        <shortName evidence="5">CdCSA6</shortName>
    </alternativeName>
</protein>
<sequence>MEDSTEDIIKSFTLEQSPEIKPKPKSKTSDLTDIVYAMDDDSIKMKKFTIFDDKYDQNVSDSEHDLTPIKRKRQQQPPPPQQPSKFSSSIPQKPTLSPKKLASSPTKNYTDHINQLRSGPNSPKKYQEDENVRSLKYEIKRLKQEQNLKLENLQNKIEYLTKERDELQDQLTSMSFENDKLAKKNRSLSHENNHLTLENSKLKTKEYSNEDLQLEKNKLQRMNNTLRSERDELVKDFNLTRDKLKKYYDLYLHCQKNHVNVKSQRTEVGGDKPTADNISTNEELVDILRKLSEMMIDQNKMSEPIAAIEKDKPSEDKTSSPNFDSSKDAPRIVSEFLEEFIKRIVEEMSANSKSAPSSKQHINSEMYSQPNNFSNNTMPPSQSAAYIPSNSQPAPRPAAAAAANIYSSSTPNTNGYNQSSHSNDRPNTFELPRVERDHWTDRPPSERSTQSTKYMKMDPEEIRKLVVIITDQLKKEENNEKSSNTLDSETPIEKCQCCHGNPRNVNEPTNQKLCQSCLNKGDFTMSEFMGHSN</sequence>
<dbReference type="EMBL" id="FM992689">
    <property type="protein sequence ID" value="CAX43409.1"/>
    <property type="molecule type" value="Genomic_DNA"/>
</dbReference>
<dbReference type="RefSeq" id="XP_002418109.1">
    <property type="nucleotide sequence ID" value="XM_002418064.1"/>
</dbReference>
<dbReference type="SMR" id="B9WAI9"/>
<dbReference type="GeneID" id="8045677"/>
<dbReference type="KEGG" id="cdu:CD36_16290"/>
<dbReference type="CGD" id="CAL0000161744">
    <property type="gene designation" value="Cd36_16290"/>
</dbReference>
<dbReference type="VEuPathDB" id="FungiDB:CD36_16290"/>
<dbReference type="HOGENOM" id="CLU_538594_0_0_1"/>
<dbReference type="OrthoDB" id="10267903at2759"/>
<dbReference type="Proteomes" id="UP000002605">
    <property type="component" value="Chromosome 2"/>
</dbReference>
<dbReference type="GO" id="GO:0005737">
    <property type="term" value="C:cytoplasm"/>
    <property type="evidence" value="ECO:0007669"/>
    <property type="project" value="UniProtKB-KW"/>
</dbReference>
<dbReference type="GO" id="GO:0044732">
    <property type="term" value="C:mitotic spindle pole body"/>
    <property type="evidence" value="ECO:0000314"/>
    <property type="project" value="UniProtKB"/>
</dbReference>
<dbReference type="GO" id="GO:1905047">
    <property type="term" value="P:mitotic spindle pole body organization"/>
    <property type="evidence" value="ECO:0000316"/>
    <property type="project" value="UniProtKB"/>
</dbReference>